<gene>
    <name evidence="2" type="primary">Manf</name>
    <name type="ORF">GL21601</name>
</gene>
<protein>
    <recommendedName>
        <fullName>Mesencephalic astrocyte-derived neurotrophic factor homolog</fullName>
    </recommendedName>
    <alternativeName>
        <fullName>MANF/CDNF-like protein</fullName>
    </alternativeName>
</protein>
<comment type="function">
    <text evidence="2">Required during the maturation of the embryonic nervous system for maintenance of neuronal and cuticular connectivity. Essential for maintenance of dopaminergic neurons and dopamine levels (By similarity).</text>
</comment>
<comment type="subcellular location">
    <subcellularLocation>
        <location evidence="2">Secreted</location>
    </subcellularLocation>
</comment>
<comment type="similarity">
    <text evidence="3">Belongs to the ARMET family.</text>
</comment>
<organism>
    <name type="scientific">Drosophila persimilis</name>
    <name type="common">Fruit fly</name>
    <dbReference type="NCBI Taxonomy" id="7234"/>
    <lineage>
        <taxon>Eukaryota</taxon>
        <taxon>Metazoa</taxon>
        <taxon>Ecdysozoa</taxon>
        <taxon>Arthropoda</taxon>
        <taxon>Hexapoda</taxon>
        <taxon>Insecta</taxon>
        <taxon>Pterygota</taxon>
        <taxon>Neoptera</taxon>
        <taxon>Endopterygota</taxon>
        <taxon>Diptera</taxon>
        <taxon>Brachycera</taxon>
        <taxon>Muscomorpha</taxon>
        <taxon>Ephydroidea</taxon>
        <taxon>Drosophilidae</taxon>
        <taxon>Drosophila</taxon>
        <taxon>Sophophora</taxon>
    </lineage>
</organism>
<proteinExistence type="inferred from homology"/>
<accession>B4GFM7</accession>
<sequence length="173" mass="20024">MKTTHLVLVLCFLAGVAQTTLALKEEDCEVCIKTVRRFAASLDDAIKGDYKQIETEFKKFCKTQKNKEHRFCYYLGGLEESATGILNEMSKPLSWSMPAEKVCEKLKKKDAQICDLRYEKQIDLNSVDLKKLKVRDLKKILNDWDESCDGCLEKSDFIKRIEELKPKYARSEL</sequence>
<reference evidence="4" key="1">
    <citation type="journal article" date="2007" name="Nature">
        <title>Evolution of genes and genomes on the Drosophila phylogeny.</title>
        <authorList>
            <consortium name="Drosophila 12 genomes consortium"/>
        </authorList>
    </citation>
    <scope>NUCLEOTIDE SEQUENCE [LARGE SCALE GENOMIC DNA]</scope>
    <source>
        <strain>MSH-3 / Tucson 14011-0111.49</strain>
    </source>
</reference>
<name>ARMET_DROPE</name>
<evidence type="ECO:0000250" key="1">
    <source>
        <dbReference type="UniProtKB" id="P55145"/>
    </source>
</evidence>
<evidence type="ECO:0000250" key="2">
    <source>
        <dbReference type="UniProtKB" id="Q9XZ63"/>
    </source>
</evidence>
<evidence type="ECO:0000255" key="3"/>
<evidence type="ECO:0000312" key="4">
    <source>
        <dbReference type="EMBL" id="EDW34412.1"/>
    </source>
</evidence>
<feature type="signal peptide" evidence="3">
    <location>
        <begin position="1"/>
        <end position="22"/>
    </location>
</feature>
<feature type="chain" id="PRO_0000390942" description="Mesencephalic astrocyte-derived neurotrophic factor homolog">
    <location>
        <begin position="23"/>
        <end position="173"/>
    </location>
</feature>
<feature type="disulfide bond" evidence="1">
    <location>
        <begin position="28"/>
        <end position="114"/>
    </location>
</feature>
<feature type="disulfide bond" evidence="1">
    <location>
        <begin position="31"/>
        <end position="103"/>
    </location>
</feature>
<feature type="disulfide bond" evidence="1">
    <location>
        <begin position="61"/>
        <end position="72"/>
    </location>
</feature>
<feature type="disulfide bond" evidence="1">
    <location>
        <begin position="148"/>
        <end position="151"/>
    </location>
</feature>
<dbReference type="EMBL" id="CH479182">
    <property type="protein sequence ID" value="EDW34412.1"/>
    <property type="molecule type" value="Genomic_DNA"/>
</dbReference>
<dbReference type="SMR" id="B4GFM7"/>
<dbReference type="STRING" id="7234.B4GFM7"/>
<dbReference type="EnsemblMetazoa" id="FBtr0187216">
    <property type="protein sequence ID" value="FBpp0185708"/>
    <property type="gene ID" value="FBgn0159194"/>
</dbReference>
<dbReference type="EnsemblMetazoa" id="XM_002017276.2">
    <property type="protein sequence ID" value="XP_002017312.1"/>
    <property type="gene ID" value="LOC6591945"/>
</dbReference>
<dbReference type="GeneID" id="6591945"/>
<dbReference type="KEGG" id="dpe:6591945"/>
<dbReference type="CTD" id="7873"/>
<dbReference type="eggNOG" id="KOG4154">
    <property type="taxonomic scope" value="Eukaryota"/>
</dbReference>
<dbReference type="HOGENOM" id="CLU_099080_1_0_1"/>
<dbReference type="OMA" id="WSMPADK"/>
<dbReference type="OrthoDB" id="5597848at2759"/>
<dbReference type="PhylomeDB" id="B4GFM7"/>
<dbReference type="ChiTaRS" id="Manf">
    <property type="organism name" value="fly"/>
</dbReference>
<dbReference type="Proteomes" id="UP000008744">
    <property type="component" value="Unassembled WGS sequence"/>
</dbReference>
<dbReference type="GO" id="GO:0005783">
    <property type="term" value="C:endoplasmic reticulum"/>
    <property type="evidence" value="ECO:0007669"/>
    <property type="project" value="EnsemblMetazoa"/>
</dbReference>
<dbReference type="GO" id="GO:0005615">
    <property type="term" value="C:extracellular space"/>
    <property type="evidence" value="ECO:0007669"/>
    <property type="project" value="TreeGrafter"/>
</dbReference>
<dbReference type="GO" id="GO:0045202">
    <property type="term" value="C:synapse"/>
    <property type="evidence" value="ECO:0007669"/>
    <property type="project" value="GOC"/>
</dbReference>
<dbReference type="GO" id="GO:0005509">
    <property type="term" value="F:calcium ion binding"/>
    <property type="evidence" value="ECO:0007669"/>
    <property type="project" value="InterPro"/>
</dbReference>
<dbReference type="GO" id="GO:0042417">
    <property type="term" value="P:dopamine metabolic process"/>
    <property type="evidence" value="ECO:0007669"/>
    <property type="project" value="EnsemblMetazoa"/>
</dbReference>
<dbReference type="GO" id="GO:0071542">
    <property type="term" value="P:dopaminergic neuron differentiation"/>
    <property type="evidence" value="ECO:0007669"/>
    <property type="project" value="TreeGrafter"/>
</dbReference>
<dbReference type="GO" id="GO:0070050">
    <property type="term" value="P:neuron cellular homeostasis"/>
    <property type="evidence" value="ECO:0007669"/>
    <property type="project" value="EnsemblMetazoa"/>
</dbReference>
<dbReference type="GO" id="GO:0031175">
    <property type="term" value="P:neuron projection development"/>
    <property type="evidence" value="ECO:0007669"/>
    <property type="project" value="EnsemblMetazoa"/>
</dbReference>
<dbReference type="GO" id="GO:0001963">
    <property type="term" value="P:synaptic transmission, dopaminergic"/>
    <property type="evidence" value="ECO:0007669"/>
    <property type="project" value="EnsemblMetazoa"/>
</dbReference>
<dbReference type="FunFam" id="1.10.225.10:FF:000003">
    <property type="entry name" value="Mesencephalic astrocyte-derived neurotrophic factor"/>
    <property type="match status" value="1"/>
</dbReference>
<dbReference type="FunFam" id="1.10.720.30:FF:000003">
    <property type="entry name" value="Mesencephalic astrocyte-derived neurotrophic factor"/>
    <property type="match status" value="1"/>
</dbReference>
<dbReference type="Gene3D" id="1.10.720.30">
    <property type="entry name" value="SAP domain"/>
    <property type="match status" value="1"/>
</dbReference>
<dbReference type="Gene3D" id="1.10.225.10">
    <property type="entry name" value="Saposin-like"/>
    <property type="match status" value="1"/>
</dbReference>
<dbReference type="InterPro" id="IPR045333">
    <property type="entry name" value="ARMET-like"/>
</dbReference>
<dbReference type="InterPro" id="IPR019345">
    <property type="entry name" value="ARMET_C"/>
</dbReference>
<dbReference type="InterPro" id="IPR045332">
    <property type="entry name" value="ARMET_N"/>
</dbReference>
<dbReference type="InterPro" id="IPR018247">
    <property type="entry name" value="EF_Hand_1_Ca_BS"/>
</dbReference>
<dbReference type="InterPro" id="IPR002048">
    <property type="entry name" value="EF_hand_dom"/>
</dbReference>
<dbReference type="InterPro" id="IPR036361">
    <property type="entry name" value="SAP_dom_sf"/>
</dbReference>
<dbReference type="PANTHER" id="PTHR12990">
    <property type="entry name" value="ARMET-LIKE PROTEIN"/>
    <property type="match status" value="1"/>
</dbReference>
<dbReference type="PANTHER" id="PTHR12990:SF5">
    <property type="entry name" value="MESENCEPHALIC ASTROCYTE-DERIVED NEUROTROPHIC FACTOR HOMOLOG"/>
    <property type="match status" value="1"/>
</dbReference>
<dbReference type="Pfam" id="PF10208">
    <property type="entry name" value="ARMET_C"/>
    <property type="match status" value="1"/>
</dbReference>
<dbReference type="Pfam" id="PF20145">
    <property type="entry name" value="ARMET_N"/>
    <property type="match status" value="1"/>
</dbReference>
<dbReference type="SUPFAM" id="SSF68906">
    <property type="entry name" value="SAP domain"/>
    <property type="match status" value="1"/>
</dbReference>
<keyword id="KW-0217">Developmental protein</keyword>
<keyword id="KW-1015">Disulfide bond</keyword>
<keyword id="KW-1185">Reference proteome</keyword>
<keyword id="KW-0964">Secreted</keyword>
<keyword id="KW-0732">Signal</keyword>